<gene>
    <name type="primary">hoxb10a</name>
    <name type="synonym">hoxb10</name>
</gene>
<protein>
    <recommendedName>
        <fullName>Homeobox protein Hox-B10a</fullName>
        <shortName>Hox-B10</shortName>
    </recommendedName>
</protein>
<name>HXBAA_DANRE</name>
<dbReference type="EMBL" id="BC155298">
    <property type="protein sequence ID" value="AAI55299.1"/>
    <property type="status" value="ALT_INIT"/>
    <property type="molecule type" value="mRNA"/>
</dbReference>
<dbReference type="EMBL" id="BC163689">
    <property type="protein sequence ID" value="AAI63689.1"/>
    <property type="molecule type" value="mRNA"/>
</dbReference>
<dbReference type="EMBL" id="AF071250">
    <property type="protein sequence ID" value="AAD15943.1"/>
    <property type="status" value="ALT_INIT"/>
    <property type="molecule type" value="Genomic_DNA"/>
</dbReference>
<dbReference type="EMBL" id="Y14531">
    <property type="protein sequence ID" value="CAA74866.1"/>
    <property type="molecule type" value="mRNA"/>
</dbReference>
<dbReference type="SMR" id="Q9PWL7"/>
<dbReference type="FunCoup" id="Q9PWL7">
    <property type="interactions" value="1"/>
</dbReference>
<dbReference type="STRING" id="7955.ENSDARP00000099793"/>
<dbReference type="PaxDb" id="7955-ENSDARP00000099793"/>
<dbReference type="AGR" id="ZFIN:ZDB-GENE-000328-2"/>
<dbReference type="ZFIN" id="ZDB-GENE-000328-2">
    <property type="gene designation" value="hoxb10a"/>
</dbReference>
<dbReference type="eggNOG" id="KOG0487">
    <property type="taxonomic scope" value="Eukaryota"/>
</dbReference>
<dbReference type="InParanoid" id="Q9PWL7"/>
<dbReference type="PhylomeDB" id="Q9PWL7"/>
<dbReference type="PRO" id="PR:Q9PWL7"/>
<dbReference type="Proteomes" id="UP000000437">
    <property type="component" value="Unplaced"/>
</dbReference>
<dbReference type="GO" id="GO:0005634">
    <property type="term" value="C:nucleus"/>
    <property type="evidence" value="ECO:0000318"/>
    <property type="project" value="GO_Central"/>
</dbReference>
<dbReference type="GO" id="GO:0000981">
    <property type="term" value="F:DNA-binding transcription factor activity, RNA polymerase II-specific"/>
    <property type="evidence" value="ECO:0000318"/>
    <property type="project" value="GO_Central"/>
</dbReference>
<dbReference type="GO" id="GO:0000978">
    <property type="term" value="F:RNA polymerase II cis-regulatory region sequence-specific DNA binding"/>
    <property type="evidence" value="ECO:0000318"/>
    <property type="project" value="GO_Central"/>
</dbReference>
<dbReference type="GO" id="GO:0006357">
    <property type="term" value="P:regulation of transcription by RNA polymerase II"/>
    <property type="evidence" value="ECO:0000318"/>
    <property type="project" value="GO_Central"/>
</dbReference>
<dbReference type="CDD" id="cd00086">
    <property type="entry name" value="homeodomain"/>
    <property type="match status" value="1"/>
</dbReference>
<dbReference type="FunFam" id="1.10.10.60:FF:000166">
    <property type="entry name" value="homeobox protein Hox-C11"/>
    <property type="match status" value="1"/>
</dbReference>
<dbReference type="Gene3D" id="1.10.10.60">
    <property type="entry name" value="Homeodomain-like"/>
    <property type="match status" value="1"/>
</dbReference>
<dbReference type="InterPro" id="IPR001356">
    <property type="entry name" value="HD"/>
</dbReference>
<dbReference type="InterPro" id="IPR020479">
    <property type="entry name" value="HD_metazoa"/>
</dbReference>
<dbReference type="InterPro" id="IPR017970">
    <property type="entry name" value="Homeobox_CS"/>
</dbReference>
<dbReference type="InterPro" id="IPR009057">
    <property type="entry name" value="Homeodomain-like_sf"/>
</dbReference>
<dbReference type="InterPro" id="IPR046333">
    <property type="entry name" value="HXA10/ABDB-like"/>
</dbReference>
<dbReference type="PANTHER" id="PTHR45874">
    <property type="entry name" value="HOMEOBOX PROTEIN ABDOMINAL-B"/>
    <property type="match status" value="1"/>
</dbReference>
<dbReference type="PANTHER" id="PTHR45874:SF6">
    <property type="entry name" value="HOMEOBOX PROTEIN HOX-B10A"/>
    <property type="match status" value="1"/>
</dbReference>
<dbReference type="Pfam" id="PF00046">
    <property type="entry name" value="Homeodomain"/>
    <property type="match status" value="1"/>
</dbReference>
<dbReference type="PRINTS" id="PR00024">
    <property type="entry name" value="HOMEOBOX"/>
</dbReference>
<dbReference type="SMART" id="SM00389">
    <property type="entry name" value="HOX"/>
    <property type="match status" value="1"/>
</dbReference>
<dbReference type="SUPFAM" id="SSF46689">
    <property type="entry name" value="Homeodomain-like"/>
    <property type="match status" value="1"/>
</dbReference>
<dbReference type="PROSITE" id="PS00027">
    <property type="entry name" value="HOMEOBOX_1"/>
    <property type="match status" value="1"/>
</dbReference>
<dbReference type="PROSITE" id="PS50071">
    <property type="entry name" value="HOMEOBOX_2"/>
    <property type="match status" value="1"/>
</dbReference>
<proteinExistence type="evidence at transcript level"/>
<comment type="function">
    <text evidence="1">Sequence-specific transcription factor which is part of a developmental regulatory system that provides cells with specific positional identities on the anterior-posterior axis.</text>
</comment>
<comment type="subcellular location">
    <subcellularLocation>
        <location evidence="2">Nucleus</location>
    </subcellularLocation>
</comment>
<comment type="developmental stage">
    <text evidence="4">At the 10-somite stage, expressed in the paraxial mesoderm with an anterior expression limit at somite 9. At the 20-somite stage, expressed in the developing CNS with an anterior expression limit adjacent to the somite 7/somite 8 boundary.</text>
</comment>
<comment type="similarity">
    <text evidence="5">Belongs to the Abd-B homeobox family.</text>
</comment>
<comment type="sequence caution" evidence="5">
    <conflict type="erroneous initiation">
        <sequence resource="EMBL-CDS" id="AAD15943"/>
    </conflict>
    <text>Truncated N-terminus.</text>
</comment>
<comment type="sequence caution" evidence="5">
    <conflict type="erroneous initiation">
        <sequence resource="EMBL-CDS" id="AAI55299"/>
    </conflict>
    <text>Truncated N-terminus.</text>
</comment>
<sequence length="279" mass="32001">MALHRHPFVHGAASWDGEQPSPVQLPHISACPFTSSGRKEDPFYFTLDPTGQARQPLDISAFSRIMTDMGSLNSADDHRPETSFYSGHKLLSLNTDTDPESPSLSSHSDSQHLHSLSLSAPCSETDNKHDMQYLAMESTKYPSQWSESRTNRSIITTLSISQRSKDDIEPNNLQTDFTRGDKTPREKTQDVTLENAANGWLSAKAGRKKRCPYSKHQILELEKEFLFNMYLTRERRLEISRSINLTDRQVKIWFQNRRMKLKKMTREHRTRDPGTSFTV</sequence>
<reference key="1">
    <citation type="submission" date="2008-04" db="EMBL/GenBank/DDBJ databases">
        <authorList>
            <consortium name="NIH - Zebrafish Gene Collection (ZGC) project"/>
        </authorList>
    </citation>
    <scope>NUCLEOTIDE SEQUENCE [LARGE SCALE MRNA]</scope>
    <source>
        <strain>Singapore</strain>
        <tissue>Embryo</tissue>
    </source>
</reference>
<reference key="2">
    <citation type="journal article" date="1998" name="Science">
        <title>Zebrafish hox clusters and vertebrate genome evolution.</title>
        <authorList>
            <person name="Amores A."/>
            <person name="Force A."/>
            <person name="Yan Y.-L."/>
            <person name="Joly L."/>
            <person name="Amemiya C."/>
            <person name="Fritz A."/>
            <person name="Ho R.K."/>
            <person name="Langeland J."/>
            <person name="Prince V.E."/>
            <person name="Wang Y.-L."/>
            <person name="Westerfield M."/>
            <person name="Ekker M."/>
            <person name="Postlethwait J.H."/>
        </authorList>
    </citation>
    <scope>NUCLEOTIDE SEQUENCE [GENOMIC DNA] OF 190-279</scope>
</reference>
<reference key="3">
    <citation type="journal article" date="1998" name="Development">
        <title>Zebrafish hox genes: genomic organization and modified colinear expression patterns in the trunk.</title>
        <authorList>
            <person name="Prince V.E."/>
            <person name="Joly L."/>
            <person name="Ekker M."/>
            <person name="Ho R.K."/>
        </authorList>
    </citation>
    <scope>NUCLEOTIDE SEQUENCE [MRNA] OF 241-279</scope>
    <scope>DEVELOPMENTAL STAGE</scope>
    <source>
        <tissue>Embryo</tissue>
    </source>
</reference>
<evidence type="ECO:0000250" key="1"/>
<evidence type="ECO:0000255" key="2">
    <source>
        <dbReference type="PROSITE-ProRule" id="PRU00108"/>
    </source>
</evidence>
<evidence type="ECO:0000256" key="3">
    <source>
        <dbReference type="SAM" id="MobiDB-lite"/>
    </source>
</evidence>
<evidence type="ECO:0000269" key="4">
    <source>
    </source>
</evidence>
<evidence type="ECO:0000305" key="5"/>
<feature type="chain" id="PRO_0000200159" description="Homeobox protein Hox-B10a">
    <location>
        <begin position="1"/>
        <end position="279"/>
    </location>
</feature>
<feature type="DNA-binding region" description="Homeobox" evidence="2">
    <location>
        <begin position="206"/>
        <end position="265"/>
    </location>
</feature>
<feature type="region of interest" description="Disordered" evidence="3">
    <location>
        <begin position="91"/>
        <end position="112"/>
    </location>
</feature>
<feature type="region of interest" description="Disordered" evidence="3">
    <location>
        <begin position="167"/>
        <end position="187"/>
    </location>
</feature>
<feature type="compositionally biased region" description="Low complexity" evidence="3">
    <location>
        <begin position="101"/>
        <end position="112"/>
    </location>
</feature>
<feature type="compositionally biased region" description="Basic and acidic residues" evidence="3">
    <location>
        <begin position="178"/>
        <end position="187"/>
    </location>
</feature>
<feature type="sequence conflict" description="In Ref. 2; AAD15943." evidence="5" ref="2">
    <original>V</original>
    <variation>E</variation>
    <location>
        <position position="191"/>
    </location>
</feature>
<organism>
    <name type="scientific">Danio rerio</name>
    <name type="common">Zebrafish</name>
    <name type="synonym">Brachydanio rerio</name>
    <dbReference type="NCBI Taxonomy" id="7955"/>
    <lineage>
        <taxon>Eukaryota</taxon>
        <taxon>Metazoa</taxon>
        <taxon>Chordata</taxon>
        <taxon>Craniata</taxon>
        <taxon>Vertebrata</taxon>
        <taxon>Euteleostomi</taxon>
        <taxon>Actinopterygii</taxon>
        <taxon>Neopterygii</taxon>
        <taxon>Teleostei</taxon>
        <taxon>Ostariophysi</taxon>
        <taxon>Cypriniformes</taxon>
        <taxon>Danionidae</taxon>
        <taxon>Danioninae</taxon>
        <taxon>Danio</taxon>
    </lineage>
</organism>
<accession>Q9PWL7</accession>
<accession>A9JTD5</accession>
<accession>B3DK18</accession>
<accession>O57361</accession>
<keyword id="KW-0217">Developmental protein</keyword>
<keyword id="KW-0238">DNA-binding</keyword>
<keyword id="KW-0371">Homeobox</keyword>
<keyword id="KW-0539">Nucleus</keyword>
<keyword id="KW-1185">Reference proteome</keyword>
<keyword id="KW-0804">Transcription</keyword>
<keyword id="KW-0805">Transcription regulation</keyword>